<protein>
    <recommendedName>
        <fullName evidence="1">N-succinylarginine dihydrolase</fullName>
        <ecNumber evidence="1">3.5.3.23</ecNumber>
    </recommendedName>
</protein>
<evidence type="ECO:0000255" key="1">
    <source>
        <dbReference type="HAMAP-Rule" id="MF_01172"/>
    </source>
</evidence>
<accession>A3MLY7</accession>
<name>ASTB_BURM7</name>
<feature type="chain" id="PRO_1000065716" description="N-succinylarginine dihydrolase">
    <location>
        <begin position="1"/>
        <end position="446"/>
    </location>
</feature>
<feature type="active site" evidence="1">
    <location>
        <position position="174"/>
    </location>
</feature>
<feature type="active site" evidence="1">
    <location>
        <position position="249"/>
    </location>
</feature>
<feature type="active site" description="Nucleophile" evidence="1">
    <location>
        <position position="370"/>
    </location>
</feature>
<feature type="binding site" evidence="1">
    <location>
        <begin position="19"/>
        <end position="28"/>
    </location>
    <ligand>
        <name>substrate</name>
    </ligand>
</feature>
<feature type="binding site" evidence="1">
    <location>
        <position position="110"/>
    </location>
    <ligand>
        <name>substrate</name>
    </ligand>
</feature>
<feature type="binding site" evidence="1">
    <location>
        <begin position="137"/>
        <end position="138"/>
    </location>
    <ligand>
        <name>substrate</name>
    </ligand>
</feature>
<feature type="binding site" evidence="1">
    <location>
        <position position="213"/>
    </location>
    <ligand>
        <name>substrate</name>
    </ligand>
</feature>
<feature type="binding site" evidence="1">
    <location>
        <position position="251"/>
    </location>
    <ligand>
        <name>substrate</name>
    </ligand>
</feature>
<feature type="binding site" evidence="1">
    <location>
        <position position="364"/>
    </location>
    <ligand>
        <name>substrate</name>
    </ligand>
</feature>
<proteinExistence type="inferred from homology"/>
<comment type="function">
    <text evidence="1">Catalyzes the hydrolysis of N(2)-succinylarginine into N(2)-succinylornithine, ammonia and CO(2).</text>
</comment>
<comment type="catalytic activity">
    <reaction evidence="1">
        <text>N(2)-succinyl-L-arginine + 2 H2O + 2 H(+) = N(2)-succinyl-L-ornithine + 2 NH4(+) + CO2</text>
        <dbReference type="Rhea" id="RHEA:19533"/>
        <dbReference type="ChEBI" id="CHEBI:15377"/>
        <dbReference type="ChEBI" id="CHEBI:15378"/>
        <dbReference type="ChEBI" id="CHEBI:16526"/>
        <dbReference type="ChEBI" id="CHEBI:28938"/>
        <dbReference type="ChEBI" id="CHEBI:58241"/>
        <dbReference type="ChEBI" id="CHEBI:58514"/>
        <dbReference type="EC" id="3.5.3.23"/>
    </reaction>
</comment>
<comment type="pathway">
    <text evidence="1">Amino-acid degradation; L-arginine degradation via AST pathway; L-glutamate and succinate from L-arginine: step 2/5.</text>
</comment>
<comment type="subunit">
    <text evidence="1">Homodimer.</text>
</comment>
<comment type="similarity">
    <text evidence="1">Belongs to the succinylarginine dihydrolase family.</text>
</comment>
<organism>
    <name type="scientific">Burkholderia mallei (strain NCTC 10247)</name>
    <dbReference type="NCBI Taxonomy" id="320389"/>
    <lineage>
        <taxon>Bacteria</taxon>
        <taxon>Pseudomonadati</taxon>
        <taxon>Pseudomonadota</taxon>
        <taxon>Betaproteobacteria</taxon>
        <taxon>Burkholderiales</taxon>
        <taxon>Burkholderiaceae</taxon>
        <taxon>Burkholderia</taxon>
        <taxon>pseudomallei group</taxon>
    </lineage>
</organism>
<gene>
    <name evidence="1" type="primary">astB</name>
    <name type="ordered locus">BMA10247_1732</name>
</gene>
<keyword id="KW-0056">Arginine metabolism</keyword>
<keyword id="KW-0378">Hydrolase</keyword>
<dbReference type="EC" id="3.5.3.23" evidence="1"/>
<dbReference type="EMBL" id="CP000548">
    <property type="protein sequence ID" value="ABO04327.1"/>
    <property type="molecule type" value="Genomic_DNA"/>
</dbReference>
<dbReference type="RefSeq" id="WP_004192611.1">
    <property type="nucleotide sequence ID" value="NZ_CP007802.1"/>
</dbReference>
<dbReference type="SMR" id="A3MLY7"/>
<dbReference type="GeneID" id="93060961"/>
<dbReference type="KEGG" id="bmaz:BM44_1458"/>
<dbReference type="KEGG" id="bmn:BMA10247_1732"/>
<dbReference type="PATRIC" id="fig|320389.8.peg.1624"/>
<dbReference type="UniPathway" id="UPA00185">
    <property type="reaction ID" value="UER00280"/>
</dbReference>
<dbReference type="GO" id="GO:0009015">
    <property type="term" value="F:N-succinylarginine dihydrolase activity"/>
    <property type="evidence" value="ECO:0007669"/>
    <property type="project" value="UniProtKB-UniRule"/>
</dbReference>
<dbReference type="GO" id="GO:0019544">
    <property type="term" value="P:arginine catabolic process to glutamate"/>
    <property type="evidence" value="ECO:0007669"/>
    <property type="project" value="UniProtKB-UniRule"/>
</dbReference>
<dbReference type="GO" id="GO:0019545">
    <property type="term" value="P:arginine catabolic process to succinate"/>
    <property type="evidence" value="ECO:0007669"/>
    <property type="project" value="UniProtKB-UniRule"/>
</dbReference>
<dbReference type="Gene3D" id="3.75.10.20">
    <property type="entry name" value="Succinylarginine dihydrolase"/>
    <property type="match status" value="1"/>
</dbReference>
<dbReference type="HAMAP" id="MF_01172">
    <property type="entry name" value="AstB"/>
    <property type="match status" value="1"/>
</dbReference>
<dbReference type="InterPro" id="IPR037031">
    <property type="entry name" value="AstB_sf"/>
</dbReference>
<dbReference type="InterPro" id="IPR007079">
    <property type="entry name" value="SuccinylArg_d-Hdrlase_AstB"/>
</dbReference>
<dbReference type="NCBIfam" id="TIGR03241">
    <property type="entry name" value="arg_catab_astB"/>
    <property type="match status" value="1"/>
</dbReference>
<dbReference type="NCBIfam" id="NF009789">
    <property type="entry name" value="PRK13281.1"/>
    <property type="match status" value="1"/>
</dbReference>
<dbReference type="PANTHER" id="PTHR30420">
    <property type="entry name" value="N-SUCCINYLARGININE DIHYDROLASE"/>
    <property type="match status" value="1"/>
</dbReference>
<dbReference type="PANTHER" id="PTHR30420:SF2">
    <property type="entry name" value="N-SUCCINYLARGININE DIHYDROLASE"/>
    <property type="match status" value="1"/>
</dbReference>
<dbReference type="Pfam" id="PF04996">
    <property type="entry name" value="AstB"/>
    <property type="match status" value="1"/>
</dbReference>
<dbReference type="SUPFAM" id="SSF55909">
    <property type="entry name" value="Pentein"/>
    <property type="match status" value="1"/>
</dbReference>
<reference key="1">
    <citation type="journal article" date="2010" name="Genome Biol. Evol.">
        <title>Continuing evolution of Burkholderia mallei through genome reduction and large-scale rearrangements.</title>
        <authorList>
            <person name="Losada L."/>
            <person name="Ronning C.M."/>
            <person name="DeShazer D."/>
            <person name="Woods D."/>
            <person name="Fedorova N."/>
            <person name="Kim H.S."/>
            <person name="Shabalina S.A."/>
            <person name="Pearson T.R."/>
            <person name="Brinkac L."/>
            <person name="Tan P."/>
            <person name="Nandi T."/>
            <person name="Crabtree J."/>
            <person name="Badger J."/>
            <person name="Beckstrom-Sternberg S."/>
            <person name="Saqib M."/>
            <person name="Schutzer S.E."/>
            <person name="Keim P."/>
            <person name="Nierman W.C."/>
        </authorList>
    </citation>
    <scope>NUCLEOTIDE SEQUENCE [LARGE SCALE GENOMIC DNA]</scope>
    <source>
        <strain>NCTC 10247</strain>
    </source>
</reference>
<sequence>MNAKEANFDGLVGPTHNYAGLSFGNVASLSNEKSDANPKAAAKQGLRKMKQLADLGFAQGVLPPQERPSLRLLRELGFSGKDADVIAKAARQAPELLAAASSASAMWTANAATVSPSADTSDARVHFTPANLCSKLHRAIEHESTRRTLAAIFADEARFAVHDALPGTPALGDEGAANHTRFCAEYGAPGVEFFVYGRAEYRRGPEPTRFPARQTFEASRAVAHRHGLREEATIYAQQRPDVIDAGVFHNDVIAVGNRDTLFCHEHAFVDRQAVYDALAASLGALGAQLNVIEVPDRAVSVADAVGSYLFNSQLLAREDGTQMLVVPQECRENANVAAYLDALVAGNGPIRDVRVFDLRESMKNGGGPACLRLRVVLNDAERAAVKPNVWIGDALFASLDAWIDKHYRDRLSPVDLADPALLDESRTALDELTQILGLGSLYDFQR</sequence>